<comment type="function">
    <text evidence="1">Catalyzes the ATP-dependent amination of UTP to CTP with either L-glutamine or ammonia as the source of nitrogen. Regulates intracellular CTP levels through interactions with the four ribonucleotide triphosphates.</text>
</comment>
<comment type="catalytic activity">
    <reaction evidence="1">
        <text>UTP + L-glutamine + ATP + H2O = CTP + L-glutamate + ADP + phosphate + 2 H(+)</text>
        <dbReference type="Rhea" id="RHEA:26426"/>
        <dbReference type="ChEBI" id="CHEBI:15377"/>
        <dbReference type="ChEBI" id="CHEBI:15378"/>
        <dbReference type="ChEBI" id="CHEBI:29985"/>
        <dbReference type="ChEBI" id="CHEBI:30616"/>
        <dbReference type="ChEBI" id="CHEBI:37563"/>
        <dbReference type="ChEBI" id="CHEBI:43474"/>
        <dbReference type="ChEBI" id="CHEBI:46398"/>
        <dbReference type="ChEBI" id="CHEBI:58359"/>
        <dbReference type="ChEBI" id="CHEBI:456216"/>
        <dbReference type="EC" id="6.3.4.2"/>
    </reaction>
</comment>
<comment type="catalytic activity">
    <reaction evidence="1">
        <text>L-glutamine + H2O = L-glutamate + NH4(+)</text>
        <dbReference type="Rhea" id="RHEA:15889"/>
        <dbReference type="ChEBI" id="CHEBI:15377"/>
        <dbReference type="ChEBI" id="CHEBI:28938"/>
        <dbReference type="ChEBI" id="CHEBI:29985"/>
        <dbReference type="ChEBI" id="CHEBI:58359"/>
    </reaction>
</comment>
<comment type="catalytic activity">
    <reaction evidence="1">
        <text>UTP + NH4(+) + ATP = CTP + ADP + phosphate + 2 H(+)</text>
        <dbReference type="Rhea" id="RHEA:16597"/>
        <dbReference type="ChEBI" id="CHEBI:15378"/>
        <dbReference type="ChEBI" id="CHEBI:28938"/>
        <dbReference type="ChEBI" id="CHEBI:30616"/>
        <dbReference type="ChEBI" id="CHEBI:37563"/>
        <dbReference type="ChEBI" id="CHEBI:43474"/>
        <dbReference type="ChEBI" id="CHEBI:46398"/>
        <dbReference type="ChEBI" id="CHEBI:456216"/>
    </reaction>
</comment>
<comment type="activity regulation">
    <text evidence="1">Allosterically activated by GTP, when glutamine is the substrate; GTP has no effect on the reaction when ammonia is the substrate. The allosteric effector GTP functions by stabilizing the protein conformation that binds the tetrahedral intermediate(s) formed during glutamine hydrolysis. Inhibited by the product CTP, via allosteric rather than competitive inhibition.</text>
</comment>
<comment type="pathway">
    <text evidence="1">Pyrimidine metabolism; CTP biosynthesis via de novo pathway; CTP from UDP: step 2/2.</text>
</comment>
<comment type="subunit">
    <text evidence="1">Homotetramer.</text>
</comment>
<comment type="miscellaneous">
    <text evidence="1">CTPSs have evolved a hybrid strategy for distinguishing between UTP and CTP. The overlapping regions of the product feedback inhibitory and substrate sites recognize a common feature in both compounds, the triphosphate moiety. To differentiate isosteric substrate and product pyrimidine rings, an additional pocket far from the expected kinase/ligase catalytic site, specifically recognizes the cytosine and ribose portions of the product inhibitor.</text>
</comment>
<comment type="similarity">
    <text evidence="1">Belongs to the CTP synthase family.</text>
</comment>
<protein>
    <recommendedName>
        <fullName evidence="1">CTP synthase</fullName>
        <ecNumber evidence="1">6.3.4.2</ecNumber>
    </recommendedName>
    <alternativeName>
        <fullName evidence="1">Cytidine 5'-triphosphate synthase</fullName>
    </alternativeName>
    <alternativeName>
        <fullName evidence="1">Cytidine triphosphate synthetase</fullName>
        <shortName evidence="1">CTP synthetase</shortName>
        <shortName evidence="1">CTPS</shortName>
    </alternativeName>
    <alternativeName>
        <fullName evidence="1">UTP--ammonia ligase</fullName>
    </alternativeName>
</protein>
<organism>
    <name type="scientific">Ehrlichia ruminantium (strain Gardel)</name>
    <dbReference type="NCBI Taxonomy" id="302409"/>
    <lineage>
        <taxon>Bacteria</taxon>
        <taxon>Pseudomonadati</taxon>
        <taxon>Pseudomonadota</taxon>
        <taxon>Alphaproteobacteria</taxon>
        <taxon>Rickettsiales</taxon>
        <taxon>Anaplasmataceae</taxon>
        <taxon>Ehrlichia</taxon>
    </lineage>
</organism>
<sequence length="543" mass="61261">MNNLTSTKFIFVTGGVVSSLGKGLAAASIGALLQARGFKICLRKLDPYLNIDPGTMSPIQHGEVFVTDDGAETDLDLGHYERFTGVKTTKNDNITTGKVYHNLLNKERKGDYLGQTVQIIPHVTDLINSFILHNTDALDFVICEIGGTVGDIESQPFLESIRQIGYKLSKNNTVFVHLTLVPYISATMELKTKPTQHSVKELSSVGIQPDIILYRSKIPLSQEQRDKIANLCNVSPTNIIPALDVKNIYELPISYHQYNLDTQILKHFNITSPEPNLDKWENILNISHVSTKTITIAIIGKYIKLLDAYKSLIEALEHAAIHNKTKLSIHWIDSRSLNNEITNTFDNVHAILIPGGFGDDGVEGKIIAIQYARINNIPFLGICMGMQLAIIEFARNVIHLEDANSTEFNFYCKNPVIHQLPELQQNLGGSMKLGSHPCYLKVDSKIFSIYKEQVINERRRHRYTVNLQYKDLLESHGLIFTGHSHHNNNDSLAEVIELKNHPWFIGVQFHPEFKSDPFQSHPLFMSFIQASLNYQETKRHKIS</sequence>
<feature type="chain" id="PRO_0000266113" description="CTP synthase">
    <location>
        <begin position="1"/>
        <end position="543"/>
    </location>
</feature>
<feature type="domain" description="Glutamine amidotransferase type-1" evidence="1">
    <location>
        <begin position="295"/>
        <end position="537"/>
    </location>
</feature>
<feature type="region of interest" description="Amidoligase domain" evidence="1">
    <location>
        <begin position="1"/>
        <end position="270"/>
    </location>
</feature>
<feature type="active site" description="Nucleophile; for glutamine hydrolysis" evidence="1">
    <location>
        <position position="383"/>
    </location>
</feature>
<feature type="active site" evidence="1">
    <location>
        <position position="510"/>
    </location>
</feature>
<feature type="active site" evidence="1">
    <location>
        <position position="512"/>
    </location>
</feature>
<feature type="binding site" evidence="1">
    <location>
        <position position="18"/>
    </location>
    <ligand>
        <name>CTP</name>
        <dbReference type="ChEBI" id="CHEBI:37563"/>
        <note>allosteric inhibitor</note>
    </ligand>
</feature>
<feature type="binding site" evidence="1">
    <location>
        <position position="18"/>
    </location>
    <ligand>
        <name>UTP</name>
        <dbReference type="ChEBI" id="CHEBI:46398"/>
    </ligand>
</feature>
<feature type="binding site" evidence="1">
    <location>
        <begin position="19"/>
        <end position="24"/>
    </location>
    <ligand>
        <name>ATP</name>
        <dbReference type="ChEBI" id="CHEBI:30616"/>
    </ligand>
</feature>
<feature type="binding site" evidence="1">
    <location>
        <position position="76"/>
    </location>
    <ligand>
        <name>ATP</name>
        <dbReference type="ChEBI" id="CHEBI:30616"/>
    </ligand>
</feature>
<feature type="binding site" evidence="1">
    <location>
        <position position="76"/>
    </location>
    <ligand>
        <name>Mg(2+)</name>
        <dbReference type="ChEBI" id="CHEBI:18420"/>
    </ligand>
</feature>
<feature type="binding site" evidence="1">
    <location>
        <position position="144"/>
    </location>
    <ligand>
        <name>Mg(2+)</name>
        <dbReference type="ChEBI" id="CHEBI:18420"/>
    </ligand>
</feature>
<feature type="binding site" evidence="1">
    <location>
        <begin position="151"/>
        <end position="153"/>
    </location>
    <ligand>
        <name>CTP</name>
        <dbReference type="ChEBI" id="CHEBI:37563"/>
        <note>allosteric inhibitor</note>
    </ligand>
</feature>
<feature type="binding site" evidence="1">
    <location>
        <begin position="191"/>
        <end position="196"/>
    </location>
    <ligand>
        <name>CTP</name>
        <dbReference type="ChEBI" id="CHEBI:37563"/>
        <note>allosteric inhibitor</note>
    </ligand>
</feature>
<feature type="binding site" evidence="1">
    <location>
        <begin position="191"/>
        <end position="196"/>
    </location>
    <ligand>
        <name>UTP</name>
        <dbReference type="ChEBI" id="CHEBI:46398"/>
    </ligand>
</feature>
<feature type="binding site" evidence="1">
    <location>
        <position position="227"/>
    </location>
    <ligand>
        <name>CTP</name>
        <dbReference type="ChEBI" id="CHEBI:37563"/>
        <note>allosteric inhibitor</note>
    </ligand>
</feature>
<feature type="binding site" evidence="1">
    <location>
        <position position="227"/>
    </location>
    <ligand>
        <name>UTP</name>
        <dbReference type="ChEBI" id="CHEBI:46398"/>
    </ligand>
</feature>
<feature type="binding site" evidence="1">
    <location>
        <position position="356"/>
    </location>
    <ligand>
        <name>L-glutamine</name>
        <dbReference type="ChEBI" id="CHEBI:58359"/>
    </ligand>
</feature>
<feature type="binding site" evidence="1">
    <location>
        <begin position="384"/>
        <end position="387"/>
    </location>
    <ligand>
        <name>L-glutamine</name>
        <dbReference type="ChEBI" id="CHEBI:58359"/>
    </ligand>
</feature>
<feature type="binding site" evidence="1">
    <location>
        <position position="407"/>
    </location>
    <ligand>
        <name>L-glutamine</name>
        <dbReference type="ChEBI" id="CHEBI:58359"/>
    </ligand>
</feature>
<feature type="binding site" evidence="1">
    <location>
        <position position="462"/>
    </location>
    <ligand>
        <name>L-glutamine</name>
        <dbReference type="ChEBI" id="CHEBI:58359"/>
    </ligand>
</feature>
<accession>Q5FFC3</accession>
<gene>
    <name evidence="1" type="primary">pyrG</name>
    <name type="ordered locus">ERGA_CDS_01090</name>
</gene>
<evidence type="ECO:0000255" key="1">
    <source>
        <dbReference type="HAMAP-Rule" id="MF_01227"/>
    </source>
</evidence>
<keyword id="KW-0067">ATP-binding</keyword>
<keyword id="KW-0315">Glutamine amidotransferase</keyword>
<keyword id="KW-0436">Ligase</keyword>
<keyword id="KW-0460">Magnesium</keyword>
<keyword id="KW-0479">Metal-binding</keyword>
<keyword id="KW-0547">Nucleotide-binding</keyword>
<keyword id="KW-0665">Pyrimidine biosynthesis</keyword>
<dbReference type="EC" id="6.3.4.2" evidence="1"/>
<dbReference type="EMBL" id="CR925677">
    <property type="protein sequence ID" value="CAI27561.1"/>
    <property type="molecule type" value="Genomic_DNA"/>
</dbReference>
<dbReference type="RefSeq" id="WP_011255304.1">
    <property type="nucleotide sequence ID" value="NC_006831.1"/>
</dbReference>
<dbReference type="SMR" id="Q5FFC3"/>
<dbReference type="KEGG" id="erg:ERGA_CDS_01090"/>
<dbReference type="HOGENOM" id="CLU_011675_5_0_5"/>
<dbReference type="OrthoDB" id="9801107at2"/>
<dbReference type="UniPathway" id="UPA00159">
    <property type="reaction ID" value="UER00277"/>
</dbReference>
<dbReference type="Proteomes" id="UP000000533">
    <property type="component" value="Chromosome"/>
</dbReference>
<dbReference type="GO" id="GO:0005524">
    <property type="term" value="F:ATP binding"/>
    <property type="evidence" value="ECO:0007669"/>
    <property type="project" value="UniProtKB-KW"/>
</dbReference>
<dbReference type="GO" id="GO:0003883">
    <property type="term" value="F:CTP synthase activity"/>
    <property type="evidence" value="ECO:0007669"/>
    <property type="project" value="UniProtKB-UniRule"/>
</dbReference>
<dbReference type="GO" id="GO:0004359">
    <property type="term" value="F:glutaminase activity"/>
    <property type="evidence" value="ECO:0007669"/>
    <property type="project" value="RHEA"/>
</dbReference>
<dbReference type="GO" id="GO:0042802">
    <property type="term" value="F:identical protein binding"/>
    <property type="evidence" value="ECO:0007669"/>
    <property type="project" value="TreeGrafter"/>
</dbReference>
<dbReference type="GO" id="GO:0046872">
    <property type="term" value="F:metal ion binding"/>
    <property type="evidence" value="ECO:0007669"/>
    <property type="project" value="UniProtKB-KW"/>
</dbReference>
<dbReference type="GO" id="GO:0044210">
    <property type="term" value="P:'de novo' CTP biosynthetic process"/>
    <property type="evidence" value="ECO:0007669"/>
    <property type="project" value="UniProtKB-UniRule"/>
</dbReference>
<dbReference type="GO" id="GO:0019856">
    <property type="term" value="P:pyrimidine nucleobase biosynthetic process"/>
    <property type="evidence" value="ECO:0007669"/>
    <property type="project" value="TreeGrafter"/>
</dbReference>
<dbReference type="CDD" id="cd03113">
    <property type="entry name" value="CTPS_N"/>
    <property type="match status" value="1"/>
</dbReference>
<dbReference type="CDD" id="cd01746">
    <property type="entry name" value="GATase1_CTP_Synthase"/>
    <property type="match status" value="1"/>
</dbReference>
<dbReference type="FunFam" id="3.40.50.300:FF:000009">
    <property type="entry name" value="CTP synthase"/>
    <property type="match status" value="1"/>
</dbReference>
<dbReference type="FunFam" id="3.40.50.880:FF:000002">
    <property type="entry name" value="CTP synthase"/>
    <property type="match status" value="1"/>
</dbReference>
<dbReference type="Gene3D" id="3.40.50.880">
    <property type="match status" value="1"/>
</dbReference>
<dbReference type="Gene3D" id="3.40.50.300">
    <property type="entry name" value="P-loop containing nucleotide triphosphate hydrolases"/>
    <property type="match status" value="1"/>
</dbReference>
<dbReference type="HAMAP" id="MF_01227">
    <property type="entry name" value="PyrG"/>
    <property type="match status" value="1"/>
</dbReference>
<dbReference type="InterPro" id="IPR029062">
    <property type="entry name" value="Class_I_gatase-like"/>
</dbReference>
<dbReference type="InterPro" id="IPR004468">
    <property type="entry name" value="CTP_synthase"/>
</dbReference>
<dbReference type="InterPro" id="IPR017456">
    <property type="entry name" value="CTP_synthase_N"/>
</dbReference>
<dbReference type="InterPro" id="IPR017926">
    <property type="entry name" value="GATASE"/>
</dbReference>
<dbReference type="InterPro" id="IPR033828">
    <property type="entry name" value="GATase1_CTP_Synthase"/>
</dbReference>
<dbReference type="InterPro" id="IPR027417">
    <property type="entry name" value="P-loop_NTPase"/>
</dbReference>
<dbReference type="NCBIfam" id="NF003792">
    <property type="entry name" value="PRK05380.1"/>
    <property type="match status" value="1"/>
</dbReference>
<dbReference type="NCBIfam" id="TIGR00337">
    <property type="entry name" value="PyrG"/>
    <property type="match status" value="1"/>
</dbReference>
<dbReference type="PANTHER" id="PTHR11550">
    <property type="entry name" value="CTP SYNTHASE"/>
    <property type="match status" value="1"/>
</dbReference>
<dbReference type="PANTHER" id="PTHR11550:SF0">
    <property type="entry name" value="CTP SYNTHASE-RELATED"/>
    <property type="match status" value="1"/>
</dbReference>
<dbReference type="Pfam" id="PF06418">
    <property type="entry name" value="CTP_synth_N"/>
    <property type="match status" value="1"/>
</dbReference>
<dbReference type="Pfam" id="PF00117">
    <property type="entry name" value="GATase"/>
    <property type="match status" value="1"/>
</dbReference>
<dbReference type="SUPFAM" id="SSF52317">
    <property type="entry name" value="Class I glutamine amidotransferase-like"/>
    <property type="match status" value="1"/>
</dbReference>
<dbReference type="SUPFAM" id="SSF52540">
    <property type="entry name" value="P-loop containing nucleoside triphosphate hydrolases"/>
    <property type="match status" value="1"/>
</dbReference>
<dbReference type="PROSITE" id="PS51273">
    <property type="entry name" value="GATASE_TYPE_1"/>
    <property type="match status" value="1"/>
</dbReference>
<reference key="1">
    <citation type="journal article" date="2006" name="J. Bacteriol.">
        <title>Comparative genomic analysis of three strains of Ehrlichia ruminantium reveals an active process of genome size plasticity.</title>
        <authorList>
            <person name="Frutos R."/>
            <person name="Viari A."/>
            <person name="Ferraz C."/>
            <person name="Morgat A."/>
            <person name="Eychenie S."/>
            <person name="Kandassamy Y."/>
            <person name="Chantal I."/>
            <person name="Bensaid A."/>
            <person name="Coissac E."/>
            <person name="Vachiery N."/>
            <person name="Demaille J."/>
            <person name="Martinez D."/>
        </authorList>
    </citation>
    <scope>NUCLEOTIDE SEQUENCE [LARGE SCALE GENOMIC DNA]</scope>
    <source>
        <strain>Gardel</strain>
    </source>
</reference>
<name>PYRG_EHRRG</name>
<proteinExistence type="inferred from homology"/>